<keyword id="KW-0067">ATP-binding</keyword>
<keyword id="KW-0131">Cell cycle</keyword>
<keyword id="KW-0132">Cell division</keyword>
<keyword id="KW-0133">Cell shape</keyword>
<keyword id="KW-0961">Cell wall biogenesis/degradation</keyword>
<keyword id="KW-0963">Cytoplasm</keyword>
<keyword id="KW-0436">Ligase</keyword>
<keyword id="KW-0547">Nucleotide-binding</keyword>
<keyword id="KW-0573">Peptidoglycan synthesis</keyword>
<keyword id="KW-1185">Reference proteome</keyword>
<reference key="1">
    <citation type="journal article" date="2008" name="Genome Biol.">
        <title>The complete genome, comparative and functional analysis of Stenotrophomonas maltophilia reveals an organism heavily shielded by drug resistance determinants.</title>
        <authorList>
            <person name="Crossman L.C."/>
            <person name="Gould V.C."/>
            <person name="Dow J.M."/>
            <person name="Vernikos G.S."/>
            <person name="Okazaki A."/>
            <person name="Sebaihia M."/>
            <person name="Saunders D."/>
            <person name="Arrowsmith C."/>
            <person name="Carver T."/>
            <person name="Peters N."/>
            <person name="Adlem E."/>
            <person name="Kerhornou A."/>
            <person name="Lord A."/>
            <person name="Murphy L."/>
            <person name="Seeger K."/>
            <person name="Squares R."/>
            <person name="Rutter S."/>
            <person name="Quail M.A."/>
            <person name="Rajandream M.A."/>
            <person name="Harris D."/>
            <person name="Churcher C."/>
            <person name="Bentley S.D."/>
            <person name="Parkhill J."/>
            <person name="Thomson N.R."/>
            <person name="Avison M.B."/>
        </authorList>
    </citation>
    <scope>NUCLEOTIDE SEQUENCE [LARGE SCALE GENOMIC DNA]</scope>
    <source>
        <strain>K279a</strain>
    </source>
</reference>
<sequence>MIRRLHDTNDLVRAFPRVHFVGIGGTGMSGIAEVMLTLGYEVSGSDNADNVATRRLASLGARIMRGHSAANVLGTDCVVVSSAIREDNPELMEARSQRIPIMPRAAMLAELMRFRRGIAVAGTHGKTTTTSLTAAVLSEGGLDPTFVIGGQLLAAGANAKLGGGQWLVAEADESDGSFLRLNPLMSIITNIDADHLENYGNDFARVQAAFAEFLQRLPFYGLAVLCIDDPEVAALAARTPRHVMSYGMSPQADVRAENVVQEGSRMRFTLRLPQGTSQEVVLALPGRHNVLNALAAAAVGWQLGVAPDAIARALEGFAGVGRRFNDLGEVTTASGAKVRIIDDYGHHPSELEAVFAAARGGWADKRLVVAFQPHRYSRTRDQFDKFAAVLSSVDALVLSEVYPAGEEPIAGADSHALARAIRARGRSEPVVVGKAAELASVLPDVLQDGDLLLMMGAGDIGAVATHIAVEGFKGEGEA</sequence>
<name>MURC_STRMK</name>
<accession>B2FNN8</accession>
<comment type="function">
    <text evidence="1">Cell wall formation.</text>
</comment>
<comment type="catalytic activity">
    <reaction evidence="1">
        <text>UDP-N-acetyl-alpha-D-muramate + L-alanine + ATP = UDP-N-acetyl-alpha-D-muramoyl-L-alanine + ADP + phosphate + H(+)</text>
        <dbReference type="Rhea" id="RHEA:23372"/>
        <dbReference type="ChEBI" id="CHEBI:15378"/>
        <dbReference type="ChEBI" id="CHEBI:30616"/>
        <dbReference type="ChEBI" id="CHEBI:43474"/>
        <dbReference type="ChEBI" id="CHEBI:57972"/>
        <dbReference type="ChEBI" id="CHEBI:70757"/>
        <dbReference type="ChEBI" id="CHEBI:83898"/>
        <dbReference type="ChEBI" id="CHEBI:456216"/>
        <dbReference type="EC" id="6.3.2.8"/>
    </reaction>
</comment>
<comment type="pathway">
    <text evidence="1">Cell wall biogenesis; peptidoglycan biosynthesis.</text>
</comment>
<comment type="subcellular location">
    <subcellularLocation>
        <location evidence="1">Cytoplasm</location>
    </subcellularLocation>
</comment>
<comment type="similarity">
    <text evidence="1">Belongs to the MurCDEF family.</text>
</comment>
<gene>
    <name evidence="1" type="primary">murC</name>
    <name type="ordered locus">Smlt0756</name>
</gene>
<dbReference type="EC" id="6.3.2.8" evidence="1"/>
<dbReference type="EMBL" id="AM743169">
    <property type="protein sequence ID" value="CAQ44333.1"/>
    <property type="molecule type" value="Genomic_DNA"/>
</dbReference>
<dbReference type="RefSeq" id="WP_005408080.1">
    <property type="nucleotide sequence ID" value="NC_010943.1"/>
</dbReference>
<dbReference type="SMR" id="B2FNN8"/>
<dbReference type="EnsemblBacteria" id="CAQ44333">
    <property type="protein sequence ID" value="CAQ44333"/>
    <property type="gene ID" value="Smlt0756"/>
</dbReference>
<dbReference type="GeneID" id="93831790"/>
<dbReference type="KEGG" id="sml:Smlt0756"/>
<dbReference type="eggNOG" id="COG0773">
    <property type="taxonomic scope" value="Bacteria"/>
</dbReference>
<dbReference type="HOGENOM" id="CLU_028104_2_2_6"/>
<dbReference type="UniPathway" id="UPA00219"/>
<dbReference type="Proteomes" id="UP000008840">
    <property type="component" value="Chromosome"/>
</dbReference>
<dbReference type="GO" id="GO:0005737">
    <property type="term" value="C:cytoplasm"/>
    <property type="evidence" value="ECO:0007669"/>
    <property type="project" value="UniProtKB-SubCell"/>
</dbReference>
<dbReference type="GO" id="GO:0005524">
    <property type="term" value="F:ATP binding"/>
    <property type="evidence" value="ECO:0007669"/>
    <property type="project" value="UniProtKB-UniRule"/>
</dbReference>
<dbReference type="GO" id="GO:0008763">
    <property type="term" value="F:UDP-N-acetylmuramate-L-alanine ligase activity"/>
    <property type="evidence" value="ECO:0007669"/>
    <property type="project" value="UniProtKB-UniRule"/>
</dbReference>
<dbReference type="GO" id="GO:0051301">
    <property type="term" value="P:cell division"/>
    <property type="evidence" value="ECO:0007669"/>
    <property type="project" value="UniProtKB-KW"/>
</dbReference>
<dbReference type="GO" id="GO:0071555">
    <property type="term" value="P:cell wall organization"/>
    <property type="evidence" value="ECO:0007669"/>
    <property type="project" value="UniProtKB-KW"/>
</dbReference>
<dbReference type="GO" id="GO:0009252">
    <property type="term" value="P:peptidoglycan biosynthetic process"/>
    <property type="evidence" value="ECO:0007669"/>
    <property type="project" value="UniProtKB-UniRule"/>
</dbReference>
<dbReference type="GO" id="GO:0008360">
    <property type="term" value="P:regulation of cell shape"/>
    <property type="evidence" value="ECO:0007669"/>
    <property type="project" value="UniProtKB-KW"/>
</dbReference>
<dbReference type="Gene3D" id="3.90.190.20">
    <property type="entry name" value="Mur ligase, C-terminal domain"/>
    <property type="match status" value="1"/>
</dbReference>
<dbReference type="Gene3D" id="3.40.1190.10">
    <property type="entry name" value="Mur-like, catalytic domain"/>
    <property type="match status" value="1"/>
</dbReference>
<dbReference type="Gene3D" id="3.40.50.720">
    <property type="entry name" value="NAD(P)-binding Rossmann-like Domain"/>
    <property type="match status" value="1"/>
</dbReference>
<dbReference type="HAMAP" id="MF_00046">
    <property type="entry name" value="MurC"/>
    <property type="match status" value="1"/>
</dbReference>
<dbReference type="InterPro" id="IPR036565">
    <property type="entry name" value="Mur-like_cat_sf"/>
</dbReference>
<dbReference type="InterPro" id="IPR004101">
    <property type="entry name" value="Mur_ligase_C"/>
</dbReference>
<dbReference type="InterPro" id="IPR036615">
    <property type="entry name" value="Mur_ligase_C_dom_sf"/>
</dbReference>
<dbReference type="InterPro" id="IPR013221">
    <property type="entry name" value="Mur_ligase_cen"/>
</dbReference>
<dbReference type="InterPro" id="IPR000713">
    <property type="entry name" value="Mur_ligase_N"/>
</dbReference>
<dbReference type="InterPro" id="IPR050061">
    <property type="entry name" value="MurCDEF_pg_biosynth"/>
</dbReference>
<dbReference type="InterPro" id="IPR005758">
    <property type="entry name" value="UDP-N-AcMur_Ala_ligase_MurC"/>
</dbReference>
<dbReference type="NCBIfam" id="TIGR01082">
    <property type="entry name" value="murC"/>
    <property type="match status" value="1"/>
</dbReference>
<dbReference type="PANTHER" id="PTHR43445:SF3">
    <property type="entry name" value="UDP-N-ACETYLMURAMATE--L-ALANINE LIGASE"/>
    <property type="match status" value="1"/>
</dbReference>
<dbReference type="PANTHER" id="PTHR43445">
    <property type="entry name" value="UDP-N-ACETYLMURAMATE--L-ALANINE LIGASE-RELATED"/>
    <property type="match status" value="1"/>
</dbReference>
<dbReference type="Pfam" id="PF01225">
    <property type="entry name" value="Mur_ligase"/>
    <property type="match status" value="1"/>
</dbReference>
<dbReference type="Pfam" id="PF02875">
    <property type="entry name" value="Mur_ligase_C"/>
    <property type="match status" value="1"/>
</dbReference>
<dbReference type="Pfam" id="PF08245">
    <property type="entry name" value="Mur_ligase_M"/>
    <property type="match status" value="1"/>
</dbReference>
<dbReference type="SUPFAM" id="SSF51984">
    <property type="entry name" value="MurCD N-terminal domain"/>
    <property type="match status" value="1"/>
</dbReference>
<dbReference type="SUPFAM" id="SSF53623">
    <property type="entry name" value="MurD-like peptide ligases, catalytic domain"/>
    <property type="match status" value="1"/>
</dbReference>
<dbReference type="SUPFAM" id="SSF53244">
    <property type="entry name" value="MurD-like peptide ligases, peptide-binding domain"/>
    <property type="match status" value="1"/>
</dbReference>
<organism>
    <name type="scientific">Stenotrophomonas maltophilia (strain K279a)</name>
    <dbReference type="NCBI Taxonomy" id="522373"/>
    <lineage>
        <taxon>Bacteria</taxon>
        <taxon>Pseudomonadati</taxon>
        <taxon>Pseudomonadota</taxon>
        <taxon>Gammaproteobacteria</taxon>
        <taxon>Lysobacterales</taxon>
        <taxon>Lysobacteraceae</taxon>
        <taxon>Stenotrophomonas</taxon>
        <taxon>Stenotrophomonas maltophilia group</taxon>
    </lineage>
</organism>
<feature type="chain" id="PRO_1000091141" description="UDP-N-acetylmuramate--L-alanine ligase">
    <location>
        <begin position="1"/>
        <end position="478"/>
    </location>
</feature>
<feature type="binding site" evidence="1">
    <location>
        <begin position="122"/>
        <end position="128"/>
    </location>
    <ligand>
        <name>ATP</name>
        <dbReference type="ChEBI" id="CHEBI:30616"/>
    </ligand>
</feature>
<evidence type="ECO:0000255" key="1">
    <source>
        <dbReference type="HAMAP-Rule" id="MF_00046"/>
    </source>
</evidence>
<protein>
    <recommendedName>
        <fullName evidence="1">UDP-N-acetylmuramate--L-alanine ligase</fullName>
        <ecNumber evidence="1">6.3.2.8</ecNumber>
    </recommendedName>
    <alternativeName>
        <fullName evidence="1">UDP-N-acetylmuramoyl-L-alanine synthetase</fullName>
    </alternativeName>
</protein>
<proteinExistence type="inferred from homology"/>